<organism>
    <name type="scientific">Drosophila virilis</name>
    <name type="common">Fruit fly</name>
    <dbReference type="NCBI Taxonomy" id="7244"/>
    <lineage>
        <taxon>Eukaryota</taxon>
        <taxon>Metazoa</taxon>
        <taxon>Ecdysozoa</taxon>
        <taxon>Arthropoda</taxon>
        <taxon>Hexapoda</taxon>
        <taxon>Insecta</taxon>
        <taxon>Pterygota</taxon>
        <taxon>Neoptera</taxon>
        <taxon>Endopterygota</taxon>
        <taxon>Diptera</taxon>
        <taxon>Brachycera</taxon>
        <taxon>Muscomorpha</taxon>
        <taxon>Ephydroidea</taxon>
        <taxon>Drosophilidae</taxon>
        <taxon>Drosophila</taxon>
    </lineage>
</organism>
<reference key="1">
    <citation type="journal article" date="1995" name="Mech. Dev.">
        <title>Conservation of structure and expression of the trithorax gene between Drosophila virilis and Drosophila melanogaster.</title>
        <authorList>
            <person name="Tillib S."/>
            <person name="Sedkov Y."/>
            <person name="Mizrokhi L."/>
            <person name="Mazo A."/>
        </authorList>
    </citation>
    <scope>NUCLEOTIDE SEQUENCE [GENOMIC DNA]</scope>
</reference>
<feature type="chain" id="PRO_0000124875" description="Histone-lysine N-methyltransferase trithorax">
    <location>
        <begin position="1"/>
        <end position="3828"/>
    </location>
</feature>
<feature type="domain" description="Bromo" evidence="3">
    <location>
        <begin position="1483"/>
        <end position="1644"/>
    </location>
</feature>
<feature type="domain" description="FYR N-terminal" evidence="8">
    <location>
        <begin position="1856"/>
        <end position="1913"/>
    </location>
</feature>
<feature type="domain" description="FYR C-terminal" evidence="9">
    <location>
        <begin position="3493"/>
        <end position="3577"/>
    </location>
</feature>
<feature type="domain" description="SET" evidence="6">
    <location>
        <begin position="3690"/>
        <end position="3806"/>
    </location>
</feature>
<feature type="domain" description="Post-SET" evidence="5">
    <location>
        <begin position="3812"/>
        <end position="3828"/>
    </location>
</feature>
<feature type="DNA-binding region" description="Nuclear receptor" evidence="7">
    <location>
        <begin position="725"/>
        <end position="839"/>
    </location>
</feature>
<feature type="zinc finger region" description="PHD-type 1" evidence="4">
    <location>
        <begin position="1251"/>
        <end position="1334"/>
    </location>
</feature>
<feature type="zinc finger region" description="PHD-type 2" evidence="4">
    <location>
        <begin position="1335"/>
        <end position="1380"/>
    </location>
</feature>
<feature type="zinc finger region" description="PHD-type 3" evidence="4">
    <location>
        <begin position="1408"/>
        <end position="1469"/>
    </location>
</feature>
<feature type="zinc finger region" description="C2HC pre-PHD-type" evidence="10">
    <location>
        <begin position="1708"/>
        <end position="1748"/>
    </location>
</feature>
<feature type="zinc finger region" description="PHD-type 4" evidence="10">
    <location>
        <begin position="1769"/>
        <end position="1816"/>
    </location>
</feature>
<feature type="region of interest" description="Disordered" evidence="11">
    <location>
        <begin position="25"/>
        <end position="179"/>
    </location>
</feature>
<feature type="region of interest" description="Disordered" evidence="11">
    <location>
        <begin position="356"/>
        <end position="390"/>
    </location>
</feature>
<feature type="region of interest" description="Disordered" evidence="11">
    <location>
        <begin position="512"/>
        <end position="589"/>
    </location>
</feature>
<feature type="region of interest" description="Disordered" evidence="11">
    <location>
        <begin position="933"/>
        <end position="1036"/>
    </location>
</feature>
<feature type="region of interest" description="Disordered" evidence="11">
    <location>
        <begin position="1075"/>
        <end position="1094"/>
    </location>
</feature>
<feature type="region of interest" description="Disordered" evidence="11">
    <location>
        <begin position="1131"/>
        <end position="1170"/>
    </location>
</feature>
<feature type="region of interest" description="Disordered" evidence="11">
    <location>
        <begin position="2252"/>
        <end position="2272"/>
    </location>
</feature>
<feature type="region of interest" description="Disordered" evidence="11">
    <location>
        <begin position="2464"/>
        <end position="2510"/>
    </location>
</feature>
<feature type="region of interest" description="Disordered" evidence="11">
    <location>
        <begin position="2826"/>
        <end position="2848"/>
    </location>
</feature>
<feature type="region of interest" description="Disordered" evidence="11">
    <location>
        <begin position="2897"/>
        <end position="2973"/>
    </location>
</feature>
<feature type="region of interest" description="Disordered" evidence="11">
    <location>
        <begin position="2988"/>
        <end position="3031"/>
    </location>
</feature>
<feature type="region of interest" description="Disordered" evidence="11">
    <location>
        <begin position="3117"/>
        <end position="3178"/>
    </location>
</feature>
<feature type="region of interest" description="Disordered" evidence="11">
    <location>
        <begin position="3314"/>
        <end position="3338"/>
    </location>
</feature>
<feature type="region of interest" description="Disordered" evidence="11">
    <location>
        <begin position="3457"/>
        <end position="3487"/>
    </location>
</feature>
<feature type="compositionally biased region" description="Low complexity" evidence="11">
    <location>
        <begin position="29"/>
        <end position="57"/>
    </location>
</feature>
<feature type="compositionally biased region" description="Polar residues" evidence="11">
    <location>
        <begin position="77"/>
        <end position="89"/>
    </location>
</feature>
<feature type="compositionally biased region" description="Low complexity" evidence="11">
    <location>
        <begin position="101"/>
        <end position="114"/>
    </location>
</feature>
<feature type="compositionally biased region" description="Acidic residues" evidence="11">
    <location>
        <begin position="152"/>
        <end position="165"/>
    </location>
</feature>
<feature type="compositionally biased region" description="Low complexity" evidence="11">
    <location>
        <begin position="359"/>
        <end position="387"/>
    </location>
</feature>
<feature type="compositionally biased region" description="Basic and acidic residues" evidence="11">
    <location>
        <begin position="513"/>
        <end position="523"/>
    </location>
</feature>
<feature type="compositionally biased region" description="Acidic residues" evidence="11">
    <location>
        <begin position="524"/>
        <end position="553"/>
    </location>
</feature>
<feature type="compositionally biased region" description="Basic and acidic residues" evidence="11">
    <location>
        <begin position="554"/>
        <end position="581"/>
    </location>
</feature>
<feature type="compositionally biased region" description="Basic and acidic residues" evidence="11">
    <location>
        <begin position="960"/>
        <end position="974"/>
    </location>
</feature>
<feature type="compositionally biased region" description="Low complexity" evidence="11">
    <location>
        <begin position="998"/>
        <end position="1022"/>
    </location>
</feature>
<feature type="compositionally biased region" description="Low complexity" evidence="11">
    <location>
        <begin position="1078"/>
        <end position="1094"/>
    </location>
</feature>
<feature type="compositionally biased region" description="Polar residues" evidence="11">
    <location>
        <begin position="1140"/>
        <end position="1170"/>
    </location>
</feature>
<feature type="compositionally biased region" description="Low complexity" evidence="11">
    <location>
        <begin position="2253"/>
        <end position="2268"/>
    </location>
</feature>
<feature type="compositionally biased region" description="Low complexity" evidence="11">
    <location>
        <begin position="2483"/>
        <end position="2510"/>
    </location>
</feature>
<feature type="compositionally biased region" description="Low complexity" evidence="11">
    <location>
        <begin position="2836"/>
        <end position="2848"/>
    </location>
</feature>
<feature type="compositionally biased region" description="Polar residues" evidence="11">
    <location>
        <begin position="2897"/>
        <end position="2917"/>
    </location>
</feature>
<feature type="compositionally biased region" description="Low complexity" evidence="11">
    <location>
        <begin position="2956"/>
        <end position="2973"/>
    </location>
</feature>
<feature type="compositionally biased region" description="Low complexity" evidence="11">
    <location>
        <begin position="2988"/>
        <end position="2997"/>
    </location>
</feature>
<feature type="compositionally biased region" description="Low complexity" evidence="11">
    <location>
        <begin position="3005"/>
        <end position="3031"/>
    </location>
</feature>
<feature type="compositionally biased region" description="Low complexity" evidence="11">
    <location>
        <begin position="3117"/>
        <end position="3132"/>
    </location>
</feature>
<feature type="compositionally biased region" description="Polar residues" evidence="11">
    <location>
        <begin position="3148"/>
        <end position="3164"/>
    </location>
</feature>
<feature type="compositionally biased region" description="Acidic residues" evidence="11">
    <location>
        <begin position="3328"/>
        <end position="3338"/>
    </location>
</feature>
<feature type="binding site" evidence="6">
    <location>
        <position position="3700"/>
    </location>
    <ligand>
        <name>S-adenosyl-L-methionine</name>
        <dbReference type="ChEBI" id="CHEBI:59789"/>
    </ligand>
</feature>
<feature type="binding site" evidence="6">
    <location>
        <position position="3702"/>
    </location>
    <ligand>
        <name>S-adenosyl-L-methionine</name>
        <dbReference type="ChEBI" id="CHEBI:59789"/>
    </ligand>
</feature>
<feature type="binding site" evidence="6">
    <location>
        <position position="3744"/>
    </location>
    <ligand>
        <name>S-adenosyl-L-methionine</name>
        <dbReference type="ChEBI" id="CHEBI:59789"/>
    </ligand>
</feature>
<feature type="binding site" evidence="1">
    <location>
        <begin position="3767"/>
        <end position="3768"/>
    </location>
    <ligand>
        <name>S-adenosyl-L-methionine</name>
        <dbReference type="ChEBI" id="CHEBI:59789"/>
    </ligand>
</feature>
<feature type="binding site" evidence="1">
    <location>
        <position position="3770"/>
    </location>
    <ligand>
        <name>Zn(2+)</name>
        <dbReference type="ChEBI" id="CHEBI:29105"/>
    </ligand>
</feature>
<feature type="binding site" evidence="1">
    <location>
        <position position="3816"/>
    </location>
    <ligand>
        <name>Zn(2+)</name>
        <dbReference type="ChEBI" id="CHEBI:29105"/>
    </ligand>
</feature>
<feature type="binding site" evidence="1">
    <location>
        <position position="3818"/>
    </location>
    <ligand>
        <name>Zn(2+)</name>
        <dbReference type="ChEBI" id="CHEBI:29105"/>
    </ligand>
</feature>
<feature type="binding site" evidence="1">
    <location>
        <position position="3823"/>
    </location>
    <ligand>
        <name>Zn(2+)</name>
        <dbReference type="ChEBI" id="CHEBI:29105"/>
    </ligand>
</feature>
<keyword id="KW-0010">Activator</keyword>
<keyword id="KW-0103">Bromodomain</keyword>
<keyword id="KW-0156">Chromatin regulator</keyword>
<keyword id="KW-0217">Developmental protein</keyword>
<keyword id="KW-0238">DNA-binding</keyword>
<keyword id="KW-0479">Metal-binding</keyword>
<keyword id="KW-0489">Methyltransferase</keyword>
<keyword id="KW-0539">Nucleus</keyword>
<keyword id="KW-0677">Repeat</keyword>
<keyword id="KW-0949">S-adenosyl-L-methionine</keyword>
<keyword id="KW-0804">Transcription</keyword>
<keyword id="KW-0805">Transcription regulation</keyword>
<keyword id="KW-0808">Transferase</keyword>
<keyword id="KW-0862">Zinc</keyword>
<keyword id="KW-0863">Zinc-finger</keyword>
<name>TRX_DROVI</name>
<evidence type="ECO:0000250" key="1"/>
<evidence type="ECO:0000250" key="2">
    <source>
        <dbReference type="UniProtKB" id="P20659"/>
    </source>
</evidence>
<evidence type="ECO:0000255" key="3">
    <source>
        <dbReference type="PROSITE-ProRule" id="PRU00035"/>
    </source>
</evidence>
<evidence type="ECO:0000255" key="4">
    <source>
        <dbReference type="PROSITE-ProRule" id="PRU00146"/>
    </source>
</evidence>
<evidence type="ECO:0000255" key="5">
    <source>
        <dbReference type="PROSITE-ProRule" id="PRU00155"/>
    </source>
</evidence>
<evidence type="ECO:0000255" key="6">
    <source>
        <dbReference type="PROSITE-ProRule" id="PRU00190"/>
    </source>
</evidence>
<evidence type="ECO:0000255" key="7">
    <source>
        <dbReference type="PROSITE-ProRule" id="PRU00407"/>
    </source>
</evidence>
<evidence type="ECO:0000255" key="8">
    <source>
        <dbReference type="PROSITE-ProRule" id="PRU00875"/>
    </source>
</evidence>
<evidence type="ECO:0000255" key="9">
    <source>
        <dbReference type="PROSITE-ProRule" id="PRU00876"/>
    </source>
</evidence>
<evidence type="ECO:0000255" key="10">
    <source>
        <dbReference type="PROSITE-ProRule" id="PRU01146"/>
    </source>
</evidence>
<evidence type="ECO:0000256" key="11">
    <source>
        <dbReference type="SAM" id="MobiDB-lite"/>
    </source>
</evidence>
<sequence>MGRSKFPGNPSKSINRKRISVLQLEDEAASAAAAAAAATAATTEQHQQSEQSAGSSASREKGNNCDNDDDDNAPSGAATSGNRGASSGASDAAPEGGNSYGNGSSTGSKTTNGGNVNGGSHHKSATAPAELKECKNQGNQIEPNNCIAAEPDGTEDTNNDDDDDSSNDKKPTAAAAAAAAAAFVPGPSALQRARKGGNKKFKNLNLARPEVMLPSTSKLKQQQQQQLQLNCPSASASSLSSSAAAAAAAAAPTTTTTTASASATLTATATSTSTSSLPGTPLSVIAGGGGGAAAAALLLANPFASVETKVVEVNAAATAAATAAATAAAGAGEDVGMLKASIEMANEAGLEAPAVAVKSSGSSPNPNHNPNAVAGSTSAAAPGAPTATKQKKTVTFKNILETSDDKSVVKRFYNPDNRVPLVSIMKKDSLNRPLNYCRGSEFIVRPSILSKILNKNSNIDKLNSLKFRSVHASSNSIQESSSSTTNLFGSGLSRAFGAPIDDEDAVSGGVTFRKQEPQHKTPEDNDDDGSASSDAIEDDEDIDDDDAEENEEAASEKSAETTASVDEKEADDRQLVMDKHFVLPKRSTRSSRIIKPNKRLLEVGGICSKRSPSDANGKPKPKNYFGLATLPAKCTPRRRRSAATALSQKLGKETFASFATAKVNSSFVLRQPRLQFQTDKSRSFVSAKPTLPTTTVLPASSSAITSANVLSFGALNNANSAVAAASTCAVCSAPVNNKDAPLARKYGVIACEVCRKFNSRMTKISKLSTPMHSNPSTSTAQSGQQLKCTDGGNCSILSLKSQLKNFKKLYKERCKACWLKKCLATLQLPAGHRSRLSAILPASMREEVAPKDDKCPELLSPTASLRFTAPTSSASSGTTIKWKSSAETAVNSIKSNPLAENNVTFGGTPLLRPAILEKPLFLKIGSDNKKAKESKEALGLSPVPSTSEAAVAPGKTTRKAKQDKEKARELEAEKPLSPNAKKTTEANTPETQKDEQPASTTTTVSAASSSTSHTSSAATNSSQLETTEAANASAVPDNLKRQRIDLKGPRVKHVCRSASIVLGQPLATFGDEEEELAAAEAGPAPTTTTTTTSPEVIIKKPKSPQPMQMIIDENDNCASCILTPTEATAEAQPAVKSVLESRSSKSNTQTEAKKTPATSGSSKGKVTTRNATATVTSVASSLVATKKQRNIEVSSSISSSQAAATQSRRALAKEVNRLKALISIDFWENYDPAEVCQTGFGLIVTETVAQRALCFLCGSTGLDPLIFCACCCEPYHQYCVLDEYNLKHSSFEDTLMTSLLETSNNACAISAATNTALNQLTQRLNWLCPRCTVCYTCNMSSGSKVKCQKCQKNYHSTCLGTSKRLLGADRPLICVNCLKCKSCATTKVSKFVGNLPMCTACFKLRKKGNFCPICQKCYDDNDFDLKMMECGDCNQWVHSKCEGLSDEQYNLLSTLPESIEFICKKCARRCDVSRNKADEWRQAVMEEFKSSLYSVLKLLSKSRQACALLKLSPRKNWRCCSAGAQPAKAHSQGKLQPKALQFTYNGLGSDGESQNSDDIYEFKEQHSTNRKPSTPVPCSCLQPLSQSPSFSLVDIKQKIASNAYVSLAEFNYDMSQVIQQSNCDELDIAYKELLSEQFPWFQNETKACTDALEEDMFESCGYEELKESPTTYAEHHTASQAPRTGLLDIPLDDVDDLGGCAVKTRLDTRVCLFCRKSGEGLSGEEARLLYCGHDCWVHINCAMWSAEVFEEIDGSLQNVHSAVARGRMIKCTVCGNRGATVGCNVKSCGEHYHYPCARTIDCAFLTDKSMYCPAHARNALKANGSPSVTYESNFEVSRPVYVELERKRKKLIVPAKVQFHIGSVAVRQLGSIVPRFSDSFEAIVPINFLCSRLYWSSKEPWKIVEYTVRTTIQNSYSSTLTLDAGRNFTVDHTNPNCSLVQLGLAQIARWHSSLARSDLLDTDWAEFPNSYVPADENTEEEPQQNADLLPPEIKDAIFEDLPHELLDGISMLDIFMYEDLGDKTELFAMSEQSKDGTTATSQAGGASVIICDEDTRNSNSLNKHLVLSNCCTASNPVDDAMLCAARSSSQEKECGDVLKKTDTAPTRSWPKLDGGSVAAFKRRKLSKNIAEGVLLSLNQRSKKEMATVAGITRRQSVCGSSELPAEGSATMRTKSFTWSAAKCLFEKNESREEPAKLTIMQMDGVDDSITEYRIIGSDGNLSTAQFTGQVKCERCQCTYRNYDSFQRHLGSCEPMSTSESESETATGTAQLSAESLNELQKQALAAATLSNTGGLNYLQTSFPQVQNLATLGQFGVQGLQGLQTLQLQPQSLGNGFFLSQPNAAQATSNGNDVLQLYANSLQNLAANLGGGFTLTQPTMSTQAQPQLIALSTNPDGTQQFIQLPQSNGATTQLLQTAAPLRCNATYQTLQATNSDKKIVLLFLEAGDPLQEVVTQAAQQATAAAHQKQLKSGHGVKPIQAKLQGQQQQQRHQQHQQHQQHQQQQQQQQQQQQQQQTPITVAQHGGTTQLLGQNLLQPQLLFQSNAQPQTQQLLLPQTQAQNIISFVTGDGSQNQPLQYISIPTTNDFKPQQTTSTPTFLTAPGGGATFLQTDASGNLMLTTAPANSGLQMLTGQLQTQPQVIGTLIQPQTLQLTTGADGTQTATAQQPLILGGATGGGTTGLEFATAPQVILATQPMYYGLETIVQNTVMSSQQFVSTAMPGVLSQNSSFSATTTQVFQASKIEPIVDLPAGYVVLNNAVDASGNTSWLQQSQTQATDDATAQLLQNAGFQFQTTPTTSTQQTMSTDYAPPLVVTAKVPPVAQMKRNTNANKSPISVLSKVQPQPQQSQVVNKVLPTNVIQQQQQQQQQQQQQQQQMQPKQQLAGNANLKLTSQFQRQQQANELKNKQAAGQQTGSTCGAPPSIASKPLQKKTNLIRPIHKVEVKPKIMKQAPKLATSAASMQHHQQQQSPAAINQVAKVALLQQRLAPAPQPQQQEPQEEQQHLHQQQQQQQQQQQHMQQHQQQQQQLSMPQLLRAQQPIISIVNTAEPQAATQFVIRPALQAQAQPIQLQEQQSQQQQQQPAEQLINGKAARLQRYASNSLPTNVVNPLQQQRCASANNSSNSNVTQQNSTITINSRPTNRVLPMQQRQEPTPLSNDVVVQSPTPPKPIEEPVPAGASTQKPIVKCYAQLEQKSPGYETELKTNITLDNLEQTNSITTMQLQQPQQGPIYGEQIFEKQSEAQVQLEKPKHNDLMLLEATSCQQQQQQQQHMEMVVDNGFQLTSNESCLLEKHGFNVEAVPMDTEDHYASMKNGSGGGAAEGIGQVDDAEEDEDDDDDFSLKMATSACNDHEMSDSEEPAVKEKISKILDNLTNDDCSDSIATATTVEASAGYQQMVEDVLATTAAGSVSTDDETFTATAEAVEAAASYINEMAEAHELQLKQLQAGVELDLKKPKLDVPQQQPDTVPPNVVPTAAAPQQPPPMRDPKKISGPHLLYEIQSEDGFTYKSSSIAEIWEKVFEAVQVARRAHGLTPLPEGPLADMSGVQMIGLKTNALKYLIEQLPGVEKCVKYTPKYHKRNGNVSTAAGGGHARTAGSNPAALAAGAESLIDYGSDQEELQENAYECARCEPYVSRSEYDMFSWLASRHRKQPIQVFVQPSDNELVPRRGTGSNLPMAMKYRTLKETYKDYVGVFRSHIHGRGLYCTKDIEAGEMVIEYAGELIRSTLTDKRERYYDSRGIGCYMFKIDDNLVVDATMRGNAARFINHSCEPNCYSKVVDILGHKHIIIFALRRIVQGEELTYDYKFPFEDEKIPCSCGSKRCRKYLN</sequence>
<protein>
    <recommendedName>
        <fullName>Histone-lysine N-methyltransferase trithorax</fullName>
        <ecNumber evidence="2">2.1.1.355</ecNumber>
    </recommendedName>
</protein>
<comment type="function">
    <text evidence="2">Histone methyltransferase that methylates 'Lys-4' of histone H3 (H3K4me). H3K4me represents a specific tag for epigenetic transcriptional activation. Functions in segment determination through interaction with genes of bithorax (BX-C) and antennapedia (ANT-C) complexes. Acts as an activator of BX-C. Involved in the very early regulation of homeotic genes expressed only in the posterior region of the embryo.</text>
</comment>
<comment type="catalytic activity">
    <reaction evidence="2">
        <text>L-lysyl(9)-[histone H3] + 3 S-adenosyl-L-methionine = N(6),N(6),N(6)-trimethyl-L-lysyl(9)-[histone H3] + 3 S-adenosyl-L-homocysteine + 3 H(+)</text>
        <dbReference type="Rhea" id="RHEA:60276"/>
        <dbReference type="Rhea" id="RHEA-COMP:15538"/>
        <dbReference type="Rhea" id="RHEA-COMP:15546"/>
        <dbReference type="ChEBI" id="CHEBI:15378"/>
        <dbReference type="ChEBI" id="CHEBI:29969"/>
        <dbReference type="ChEBI" id="CHEBI:57856"/>
        <dbReference type="ChEBI" id="CHEBI:59789"/>
        <dbReference type="ChEBI" id="CHEBI:61961"/>
        <dbReference type="EC" id="2.1.1.355"/>
    </reaction>
</comment>
<comment type="subunit">
    <text evidence="1">Interacts with ash1 via its SET domain.</text>
</comment>
<comment type="subcellular location">
    <subcellularLocation>
        <location>Nucleus</location>
    </subcellularLocation>
</comment>
<comment type="similarity">
    <text evidence="6">Belongs to the class V-like SAM-binding methyltransferase superfamily. Histone-lysine methyltransferase family. TRX/MLL subfamily.</text>
</comment>
<accession>Q24742</accession>
<dbReference type="EC" id="2.1.1.355" evidence="2"/>
<dbReference type="EMBL" id="Z50038">
    <property type="protein sequence ID" value="CAA90349.1"/>
    <property type="molecule type" value="Genomic_DNA"/>
</dbReference>
<dbReference type="PIR" id="T13857">
    <property type="entry name" value="T13857"/>
</dbReference>
<dbReference type="SMR" id="Q24742"/>
<dbReference type="eggNOG" id="KOG1084">
    <property type="taxonomic scope" value="Eukaryota"/>
</dbReference>
<dbReference type="OrthoDB" id="308383at2759"/>
<dbReference type="ChiTaRS" id="trx">
    <property type="organism name" value="fly"/>
</dbReference>
<dbReference type="GO" id="GO:0000123">
    <property type="term" value="C:histone acetyltransferase complex"/>
    <property type="evidence" value="ECO:0007669"/>
    <property type="project" value="EnsemblMetazoa"/>
</dbReference>
<dbReference type="GO" id="GO:0044665">
    <property type="term" value="C:MLL1/2 complex"/>
    <property type="evidence" value="ECO:0007669"/>
    <property type="project" value="EnsemblMetazoa"/>
</dbReference>
<dbReference type="GO" id="GO:0005704">
    <property type="term" value="C:polytene chromosome band"/>
    <property type="evidence" value="ECO:0007669"/>
    <property type="project" value="EnsemblMetazoa"/>
</dbReference>
<dbReference type="GO" id="GO:0008023">
    <property type="term" value="C:transcription elongation factor complex"/>
    <property type="evidence" value="ECO:0007669"/>
    <property type="project" value="EnsemblMetazoa"/>
</dbReference>
<dbReference type="GO" id="GO:0003682">
    <property type="term" value="F:chromatin binding"/>
    <property type="evidence" value="ECO:0007669"/>
    <property type="project" value="EnsemblMetazoa"/>
</dbReference>
<dbReference type="GO" id="GO:0003700">
    <property type="term" value="F:DNA-binding transcription factor activity"/>
    <property type="evidence" value="ECO:0007669"/>
    <property type="project" value="InterPro"/>
</dbReference>
<dbReference type="GO" id="GO:0042800">
    <property type="term" value="F:histone H3K4 methyltransferase activity"/>
    <property type="evidence" value="ECO:0007669"/>
    <property type="project" value="EnsemblMetazoa"/>
</dbReference>
<dbReference type="GO" id="GO:0140949">
    <property type="term" value="F:histone H3K9 trimethyltransferase activity"/>
    <property type="evidence" value="ECO:0007669"/>
    <property type="project" value="UniProtKB-EC"/>
</dbReference>
<dbReference type="GO" id="GO:0042803">
    <property type="term" value="F:protein homodimerization activity"/>
    <property type="evidence" value="ECO:0007669"/>
    <property type="project" value="EnsemblMetazoa"/>
</dbReference>
<dbReference type="GO" id="GO:0008157">
    <property type="term" value="F:protein phosphatase 1 binding"/>
    <property type="evidence" value="ECO:0007669"/>
    <property type="project" value="EnsemblMetazoa"/>
</dbReference>
<dbReference type="GO" id="GO:0106363">
    <property type="term" value="F:protein-cysteine methyltransferase activity"/>
    <property type="evidence" value="ECO:0007669"/>
    <property type="project" value="EnsemblMetazoa"/>
</dbReference>
<dbReference type="GO" id="GO:0043565">
    <property type="term" value="F:sequence-specific DNA binding"/>
    <property type="evidence" value="ECO:0007669"/>
    <property type="project" value="InterPro"/>
</dbReference>
<dbReference type="GO" id="GO:0008270">
    <property type="term" value="F:zinc ion binding"/>
    <property type="evidence" value="ECO:0007669"/>
    <property type="project" value="UniProtKB-KW"/>
</dbReference>
<dbReference type="GO" id="GO:0001654">
    <property type="term" value="P:eye development"/>
    <property type="evidence" value="ECO:0007669"/>
    <property type="project" value="EnsemblMetazoa"/>
</dbReference>
<dbReference type="GO" id="GO:0008354">
    <property type="term" value="P:germ cell migration"/>
    <property type="evidence" value="ECO:0007669"/>
    <property type="project" value="EnsemblMetazoa"/>
</dbReference>
<dbReference type="GO" id="GO:0007482">
    <property type="term" value="P:haltere development"/>
    <property type="evidence" value="ECO:0007669"/>
    <property type="project" value="EnsemblMetazoa"/>
</dbReference>
<dbReference type="GO" id="GO:0007507">
    <property type="term" value="P:heart development"/>
    <property type="evidence" value="ECO:0007669"/>
    <property type="project" value="EnsemblMetazoa"/>
</dbReference>
<dbReference type="GO" id="GO:0032259">
    <property type="term" value="P:methylation"/>
    <property type="evidence" value="ECO:0007669"/>
    <property type="project" value="UniProtKB-KW"/>
</dbReference>
<dbReference type="GO" id="GO:0032968">
    <property type="term" value="P:positive regulation of transcription elongation by RNA polymerase II"/>
    <property type="evidence" value="ECO:0007669"/>
    <property type="project" value="EnsemblMetazoa"/>
</dbReference>
<dbReference type="CDD" id="cd15664">
    <property type="entry name" value="ePHD_KMT2A_like"/>
    <property type="match status" value="1"/>
</dbReference>
<dbReference type="CDD" id="cd15506">
    <property type="entry name" value="PHD1_KMT2A_like"/>
    <property type="match status" value="1"/>
</dbReference>
<dbReference type="CDD" id="cd15508">
    <property type="entry name" value="PHD3_KMT2A_like"/>
    <property type="match status" value="1"/>
</dbReference>
<dbReference type="CDD" id="cd15489">
    <property type="entry name" value="PHD_SF"/>
    <property type="match status" value="1"/>
</dbReference>
<dbReference type="CDD" id="cd19170">
    <property type="entry name" value="SET_KMT2A_2B"/>
    <property type="match status" value="1"/>
</dbReference>
<dbReference type="FunFam" id="2.170.270.10:FF:000004">
    <property type="entry name" value="Histone-lysine N-methyltransferase"/>
    <property type="match status" value="1"/>
</dbReference>
<dbReference type="FunFam" id="3.30.40.10:FF:000002">
    <property type="entry name" value="Histone-lysine N-methyltransferase"/>
    <property type="match status" value="1"/>
</dbReference>
<dbReference type="Gene3D" id="3.30.160.360">
    <property type="match status" value="2"/>
</dbReference>
<dbReference type="Gene3D" id="1.20.920.10">
    <property type="entry name" value="Bromodomain-like"/>
    <property type="match status" value="1"/>
</dbReference>
<dbReference type="Gene3D" id="2.170.270.10">
    <property type="entry name" value="SET domain"/>
    <property type="match status" value="1"/>
</dbReference>
<dbReference type="Gene3D" id="3.30.40.10">
    <property type="entry name" value="Zinc/RING finger domain, C3HC4 (zinc finger)"/>
    <property type="match status" value="2"/>
</dbReference>
<dbReference type="InterPro" id="IPR036427">
    <property type="entry name" value="Bromodomain-like_sf"/>
</dbReference>
<dbReference type="InterPro" id="IPR034732">
    <property type="entry name" value="EPHD"/>
</dbReference>
<dbReference type="InterPro" id="IPR003889">
    <property type="entry name" value="FYrich_C"/>
</dbReference>
<dbReference type="InterPro" id="IPR003888">
    <property type="entry name" value="FYrich_N"/>
</dbReference>
<dbReference type="InterPro" id="IPR047219">
    <property type="entry name" value="KMT2A_2B_SET"/>
</dbReference>
<dbReference type="InterPro" id="IPR016569">
    <property type="entry name" value="MeTrfase_trithorax"/>
</dbReference>
<dbReference type="InterPro" id="IPR003616">
    <property type="entry name" value="Post-SET_dom"/>
</dbReference>
<dbReference type="InterPro" id="IPR001214">
    <property type="entry name" value="SET_dom"/>
</dbReference>
<dbReference type="InterPro" id="IPR046341">
    <property type="entry name" value="SET_dom_sf"/>
</dbReference>
<dbReference type="InterPro" id="IPR011011">
    <property type="entry name" value="Znf_FYVE_PHD"/>
</dbReference>
<dbReference type="InterPro" id="IPR001628">
    <property type="entry name" value="Znf_hrmn_rcpt"/>
</dbReference>
<dbReference type="InterPro" id="IPR001965">
    <property type="entry name" value="Znf_PHD"/>
</dbReference>
<dbReference type="InterPro" id="IPR019787">
    <property type="entry name" value="Znf_PHD-finger"/>
</dbReference>
<dbReference type="InterPro" id="IPR013083">
    <property type="entry name" value="Znf_RING/FYVE/PHD"/>
</dbReference>
<dbReference type="PANTHER" id="PTHR45838:SF4">
    <property type="entry name" value="HISTONE-LYSINE N-METHYLTRANSFERASE TRITHORAX"/>
    <property type="match status" value="1"/>
</dbReference>
<dbReference type="PANTHER" id="PTHR45838">
    <property type="entry name" value="HISTONE-LYSINE-N-METHYLTRANSFERASE 2 KMT2 FAMILY MEMBER"/>
    <property type="match status" value="1"/>
</dbReference>
<dbReference type="Pfam" id="PF05965">
    <property type="entry name" value="FYRC"/>
    <property type="match status" value="1"/>
</dbReference>
<dbReference type="Pfam" id="PF05964">
    <property type="entry name" value="FYRN"/>
    <property type="match status" value="1"/>
</dbReference>
<dbReference type="Pfam" id="PF00628">
    <property type="entry name" value="PHD"/>
    <property type="match status" value="1"/>
</dbReference>
<dbReference type="Pfam" id="PF00856">
    <property type="entry name" value="SET"/>
    <property type="match status" value="1"/>
</dbReference>
<dbReference type="Pfam" id="PF13771">
    <property type="entry name" value="zf-HC5HC2H"/>
    <property type="match status" value="1"/>
</dbReference>
<dbReference type="PIRSF" id="PIRSF010354">
    <property type="entry name" value="Methyltransferase_trithorax"/>
    <property type="match status" value="1"/>
</dbReference>
<dbReference type="SMART" id="SM00542">
    <property type="entry name" value="FYRC"/>
    <property type="match status" value="1"/>
</dbReference>
<dbReference type="SMART" id="SM00541">
    <property type="entry name" value="FYRN"/>
    <property type="match status" value="1"/>
</dbReference>
<dbReference type="SMART" id="SM00249">
    <property type="entry name" value="PHD"/>
    <property type="match status" value="4"/>
</dbReference>
<dbReference type="SMART" id="SM00508">
    <property type="entry name" value="PostSET"/>
    <property type="match status" value="1"/>
</dbReference>
<dbReference type="SMART" id="SM00317">
    <property type="entry name" value="SET"/>
    <property type="match status" value="1"/>
</dbReference>
<dbReference type="SUPFAM" id="SSF57903">
    <property type="entry name" value="FYVE/PHD zinc finger"/>
    <property type="match status" value="2"/>
</dbReference>
<dbReference type="SUPFAM" id="SSF82199">
    <property type="entry name" value="SET domain"/>
    <property type="match status" value="1"/>
</dbReference>
<dbReference type="PROSITE" id="PS50014">
    <property type="entry name" value="BROMODOMAIN_2"/>
    <property type="match status" value="1"/>
</dbReference>
<dbReference type="PROSITE" id="PS51805">
    <property type="entry name" value="EPHD"/>
    <property type="match status" value="1"/>
</dbReference>
<dbReference type="PROSITE" id="PS51543">
    <property type="entry name" value="FYRC"/>
    <property type="match status" value="1"/>
</dbReference>
<dbReference type="PROSITE" id="PS51542">
    <property type="entry name" value="FYRN"/>
    <property type="match status" value="1"/>
</dbReference>
<dbReference type="PROSITE" id="PS51030">
    <property type="entry name" value="NUCLEAR_REC_DBD_2"/>
    <property type="match status" value="1"/>
</dbReference>
<dbReference type="PROSITE" id="PS50868">
    <property type="entry name" value="POST_SET"/>
    <property type="match status" value="1"/>
</dbReference>
<dbReference type="PROSITE" id="PS50280">
    <property type="entry name" value="SET"/>
    <property type="match status" value="1"/>
</dbReference>
<dbReference type="PROSITE" id="PS01359">
    <property type="entry name" value="ZF_PHD_1"/>
    <property type="match status" value="3"/>
</dbReference>
<dbReference type="PROSITE" id="PS50016">
    <property type="entry name" value="ZF_PHD_2"/>
    <property type="match status" value="3"/>
</dbReference>
<proteinExistence type="inferred from homology"/>
<gene>
    <name type="primary">trx</name>
</gene>